<organismHost>
    <name type="scientific">Orgyia pseudotsugata</name>
    <name type="common">Douglas-fir tussock moth</name>
    <dbReference type="NCBI Taxonomy" id="33414"/>
</organismHost>
<gene>
    <name type="primary">VCATH</name>
    <name type="ORF">ORF125</name>
</gene>
<keyword id="KW-1015">Disulfide bond</keyword>
<keyword id="KW-0325">Glycoprotein</keyword>
<keyword id="KW-0378">Hydrolase</keyword>
<keyword id="KW-0645">Protease</keyword>
<keyword id="KW-1185">Reference proteome</keyword>
<keyword id="KW-0732">Signal</keyword>
<keyword id="KW-0788">Thiol protease</keyword>
<keyword id="KW-0865">Zymogen</keyword>
<organism>
    <name type="scientific">Orgyia pseudotsugata multicapsid polyhedrosis virus</name>
    <name type="common">OpMNPV</name>
    <dbReference type="NCBI Taxonomy" id="262177"/>
    <lineage>
        <taxon>Viruses</taxon>
        <taxon>Viruses incertae sedis</taxon>
        <taxon>Naldaviricetes</taxon>
        <taxon>Lefavirales</taxon>
        <taxon>Baculoviridae</taxon>
        <taxon>Alphabaculovirus</taxon>
        <taxon>Alphabaculovirus orpseudotsugatae</taxon>
    </lineage>
</organism>
<reference key="1">
    <citation type="journal article" date="1997" name="Virology">
        <title>The sequence of the Orgyia pseudotsugata multinucleocapsid nuclear polyhedrosis virus genome.</title>
        <authorList>
            <person name="Ahrens C.H."/>
            <person name="Russell R.R."/>
            <person name="Funk C.J."/>
            <person name="Evans J."/>
            <person name="Harwood S."/>
            <person name="Rohrmann G.F."/>
        </authorList>
    </citation>
    <scope>NUCLEOTIDE SEQUENCE [LARGE SCALE GENOMIC DNA]</scope>
</reference>
<evidence type="ECO:0000250" key="1"/>
<evidence type="ECO:0000255" key="2"/>
<evidence type="ECO:0000255" key="3">
    <source>
        <dbReference type="PROSITE-ProRule" id="PRU10088"/>
    </source>
</evidence>
<evidence type="ECO:0000255" key="4">
    <source>
        <dbReference type="PROSITE-ProRule" id="PRU10089"/>
    </source>
</evidence>
<evidence type="ECO:0000255" key="5">
    <source>
        <dbReference type="PROSITE-ProRule" id="PRU10090"/>
    </source>
</evidence>
<proteinExistence type="inferred from homology"/>
<name>CATV_NPVOP</name>
<sequence>MNKIMLCLLVCGVVHAATYDLLKAPNYFEDFLHKFNKNYSSESEKLHRFKIFQHNLEEIINKNQNDSTAQYEINKFSDLSKEEAISKYTGLSLPHQTQNFCEVVILDRPPDRGPLEFDWRQFNKVTSVKNQGVCGACWAFATLGSLESQFAIKYNRLINLSEQQFIDCDRVNAGCDGGLLHTAFESAMEMGGVQMESDYPYETANGQCRINPNRFVVGVRSCRRYIVMFEEKLKDLLRAVGPIPVAIDASDIVNYRRGIMRQCANHGLNHAVLLVGYAVENNIPYWILKNTWGTDWGEDGYFRVQQNINACGIRNELVSSAEIY</sequence>
<dbReference type="EC" id="3.4.22.50"/>
<dbReference type="EMBL" id="U75930">
    <property type="protein sequence ID" value="AAC59124.1"/>
    <property type="molecule type" value="Genomic_DNA"/>
</dbReference>
<dbReference type="RefSeq" id="NP_046281.1">
    <property type="nucleotide sequence ID" value="NC_001875.2"/>
</dbReference>
<dbReference type="SMR" id="O10364"/>
<dbReference type="MEROPS" id="C01.083"/>
<dbReference type="GlyCosmos" id="O10364">
    <property type="glycosylation" value="1 site, No reported glycans"/>
</dbReference>
<dbReference type="KEGG" id="vg:912077"/>
<dbReference type="OrthoDB" id="4752at10239"/>
<dbReference type="Proteomes" id="UP000009248">
    <property type="component" value="Genome"/>
</dbReference>
<dbReference type="GO" id="GO:0008234">
    <property type="term" value="F:cysteine-type peptidase activity"/>
    <property type="evidence" value="ECO:0007669"/>
    <property type="project" value="UniProtKB-KW"/>
</dbReference>
<dbReference type="GO" id="GO:0006508">
    <property type="term" value="P:proteolysis"/>
    <property type="evidence" value="ECO:0007669"/>
    <property type="project" value="UniProtKB-KW"/>
</dbReference>
<dbReference type="CDD" id="cd02248">
    <property type="entry name" value="Peptidase_C1A"/>
    <property type="match status" value="1"/>
</dbReference>
<dbReference type="FunFam" id="3.90.70.10:FF:000103">
    <property type="entry name" value="Hypothetical LOC496748"/>
    <property type="match status" value="1"/>
</dbReference>
<dbReference type="Gene3D" id="3.90.70.10">
    <property type="entry name" value="Cysteine proteinases"/>
    <property type="match status" value="1"/>
</dbReference>
<dbReference type="InterPro" id="IPR038765">
    <property type="entry name" value="Papain-like_cys_pep_sf"/>
</dbReference>
<dbReference type="InterPro" id="IPR025661">
    <property type="entry name" value="Pept_asp_AS"/>
</dbReference>
<dbReference type="InterPro" id="IPR000169">
    <property type="entry name" value="Pept_cys_AS"/>
</dbReference>
<dbReference type="InterPro" id="IPR025660">
    <property type="entry name" value="Pept_his_AS"/>
</dbReference>
<dbReference type="InterPro" id="IPR013128">
    <property type="entry name" value="Peptidase_C1A"/>
</dbReference>
<dbReference type="InterPro" id="IPR000668">
    <property type="entry name" value="Peptidase_C1A_C"/>
</dbReference>
<dbReference type="InterPro" id="IPR039417">
    <property type="entry name" value="Peptidase_C1A_papain-like"/>
</dbReference>
<dbReference type="InterPro" id="IPR013201">
    <property type="entry name" value="Prot_inhib_I29"/>
</dbReference>
<dbReference type="PANTHER" id="PTHR12411">
    <property type="entry name" value="CYSTEINE PROTEASE FAMILY C1-RELATED"/>
    <property type="match status" value="1"/>
</dbReference>
<dbReference type="Pfam" id="PF08246">
    <property type="entry name" value="Inhibitor_I29"/>
    <property type="match status" value="1"/>
</dbReference>
<dbReference type="Pfam" id="PF00112">
    <property type="entry name" value="Peptidase_C1"/>
    <property type="match status" value="1"/>
</dbReference>
<dbReference type="PRINTS" id="PR00705">
    <property type="entry name" value="PAPAIN"/>
</dbReference>
<dbReference type="SMART" id="SM00848">
    <property type="entry name" value="Inhibitor_I29"/>
    <property type="match status" value="1"/>
</dbReference>
<dbReference type="SMART" id="SM00645">
    <property type="entry name" value="Pept_C1"/>
    <property type="match status" value="1"/>
</dbReference>
<dbReference type="SUPFAM" id="SSF54001">
    <property type="entry name" value="Cysteine proteinases"/>
    <property type="match status" value="1"/>
</dbReference>
<dbReference type="PROSITE" id="PS00640">
    <property type="entry name" value="THIOL_PROTEASE_ASN"/>
    <property type="match status" value="1"/>
</dbReference>
<dbReference type="PROSITE" id="PS00139">
    <property type="entry name" value="THIOL_PROTEASE_CYS"/>
    <property type="match status" value="1"/>
</dbReference>
<dbReference type="PROSITE" id="PS00639">
    <property type="entry name" value="THIOL_PROTEASE_HIS"/>
    <property type="match status" value="1"/>
</dbReference>
<feature type="signal peptide" evidence="2">
    <location>
        <begin position="1"/>
        <end position="16"/>
    </location>
</feature>
<feature type="propeptide" id="PRO_0000322214" description="Activation peptide" evidence="2">
    <location>
        <begin position="17"/>
        <end position="113"/>
    </location>
</feature>
<feature type="chain" id="PRO_0000050584" description="Viral cathepsin">
    <location>
        <begin position="114"/>
        <end position="324"/>
    </location>
</feature>
<feature type="active site" evidence="1">
    <location>
        <position position="137"/>
    </location>
</feature>
<feature type="active site" evidence="1">
    <location>
        <position position="270"/>
    </location>
</feature>
<feature type="active site" evidence="1">
    <location>
        <position position="290"/>
    </location>
</feature>
<feature type="glycosylation site" description="N-linked (GlcNAc...) asparagine; by host" evidence="2">
    <location>
        <position position="159"/>
    </location>
</feature>
<feature type="disulfide bond" evidence="1">
    <location>
        <begin position="134"/>
        <end position="175"/>
    </location>
</feature>
<feature type="disulfide bond" evidence="1">
    <location>
        <begin position="168"/>
        <end position="208"/>
    </location>
</feature>
<feature type="disulfide bond" evidence="1">
    <location>
        <begin position="263"/>
        <end position="311"/>
    </location>
</feature>
<comment type="function">
    <text evidence="1">Cysteine protease that plays an essential role in host liquefaction to facilitate horizontal transmission of the virus. May participate in the degradation of foreign protein expressed by the baculovirus system (By similarity).</text>
</comment>
<comment type="catalytic activity">
    <reaction>
        <text>Endopeptidase of broad specificity, hydrolyzing substrates of both cathepsin L and cathepsin B.</text>
        <dbReference type="EC" id="3.4.22.50"/>
    </reaction>
</comment>
<comment type="PTM">
    <text evidence="1">Synthesized as an inactive proenzyme and activated by proteolytic removal of the inhibitory propeptide.</text>
</comment>
<comment type="similarity">
    <text evidence="3 4 5">Belongs to the peptidase C1 family.</text>
</comment>
<protein>
    <recommendedName>
        <fullName>Viral cathepsin</fullName>
        <shortName>V-cath</shortName>
        <ecNumber>3.4.22.50</ecNumber>
    </recommendedName>
    <alternativeName>
        <fullName>Cysteine proteinase</fullName>
        <shortName>CP</shortName>
    </alternativeName>
</protein>
<accession>O10364</accession>